<comment type="catalytic activity">
    <reaction>
        <text>a plastoquinone + NADH + (n+1) H(+)(in) = a plastoquinol + NAD(+) + n H(+)(out)</text>
        <dbReference type="Rhea" id="RHEA:42608"/>
        <dbReference type="Rhea" id="RHEA-COMP:9561"/>
        <dbReference type="Rhea" id="RHEA-COMP:9562"/>
        <dbReference type="ChEBI" id="CHEBI:15378"/>
        <dbReference type="ChEBI" id="CHEBI:17757"/>
        <dbReference type="ChEBI" id="CHEBI:57540"/>
        <dbReference type="ChEBI" id="CHEBI:57945"/>
        <dbReference type="ChEBI" id="CHEBI:62192"/>
    </reaction>
</comment>
<comment type="catalytic activity">
    <reaction>
        <text>a plastoquinone + NADPH + (n+1) H(+)(in) = a plastoquinol + NADP(+) + n H(+)(out)</text>
        <dbReference type="Rhea" id="RHEA:42612"/>
        <dbReference type="Rhea" id="RHEA-COMP:9561"/>
        <dbReference type="Rhea" id="RHEA-COMP:9562"/>
        <dbReference type="ChEBI" id="CHEBI:15378"/>
        <dbReference type="ChEBI" id="CHEBI:17757"/>
        <dbReference type="ChEBI" id="CHEBI:57783"/>
        <dbReference type="ChEBI" id="CHEBI:58349"/>
        <dbReference type="ChEBI" id="CHEBI:62192"/>
    </reaction>
</comment>
<comment type="subcellular location">
    <subcellularLocation>
        <location evidence="3">Plastid</location>
        <location evidence="3">Chloroplast thylakoid membrane</location>
        <topology evidence="3">Multi-pass membrane protein</topology>
    </subcellularLocation>
</comment>
<comment type="RNA editing">
    <location>
        <position position="1" evidence="1"/>
    </location>
    <text evidence="1">The initiator methionine is created by RNA editing.</text>
</comment>
<comment type="similarity">
    <text evidence="3">Belongs to the complex I subunit 4 family.</text>
</comment>
<feature type="chain" id="PRO_0000118016" description="NAD(P)H-quinone oxidoreductase chain 4, chloroplastic">
    <location>
        <begin position="1"/>
        <end position="497"/>
    </location>
</feature>
<feature type="transmembrane region" description="Helical" evidence="2">
    <location>
        <begin position="4"/>
        <end position="24"/>
    </location>
</feature>
<feature type="transmembrane region" description="Helical" evidence="2">
    <location>
        <begin position="35"/>
        <end position="55"/>
    </location>
</feature>
<feature type="transmembrane region" description="Helical" evidence="2">
    <location>
        <begin position="84"/>
        <end position="104"/>
    </location>
</feature>
<feature type="transmembrane region" description="Helical" evidence="2">
    <location>
        <begin position="111"/>
        <end position="131"/>
    </location>
</feature>
<feature type="transmembrane region" description="Helical" evidence="2">
    <location>
        <begin position="134"/>
        <end position="154"/>
    </location>
</feature>
<feature type="transmembrane region" description="Helical" evidence="2">
    <location>
        <begin position="167"/>
        <end position="187"/>
    </location>
</feature>
<feature type="transmembrane region" description="Helical" evidence="2">
    <location>
        <begin position="208"/>
        <end position="228"/>
    </location>
</feature>
<feature type="transmembrane region" description="Helical" evidence="2">
    <location>
        <begin position="242"/>
        <end position="262"/>
    </location>
</feature>
<feature type="transmembrane region" description="Helical" evidence="2">
    <location>
        <begin position="274"/>
        <end position="294"/>
    </location>
</feature>
<feature type="transmembrane region" description="Helical" evidence="2">
    <location>
        <begin position="305"/>
        <end position="325"/>
    </location>
</feature>
<feature type="transmembrane region" description="Helical" evidence="2">
    <location>
        <begin position="330"/>
        <end position="350"/>
    </location>
</feature>
<feature type="transmembrane region" description="Helical" evidence="2">
    <location>
        <begin position="386"/>
        <end position="406"/>
    </location>
</feature>
<feature type="transmembrane region" description="Helical" evidence="2">
    <location>
        <begin position="411"/>
        <end position="431"/>
    </location>
</feature>
<feature type="transmembrane region" description="Helical" evidence="2">
    <location>
        <begin position="463"/>
        <end position="483"/>
    </location>
</feature>
<dbReference type="EC" id="7.1.1.-"/>
<dbReference type="EMBL" id="AP002983">
    <property type="protein sequence ID" value="BAB33245.1"/>
    <property type="molecule type" value="Genomic_DNA"/>
</dbReference>
<dbReference type="RefSeq" id="NP_084845.1">
    <property type="nucleotide sequence ID" value="NC_002694.1"/>
</dbReference>
<dbReference type="SMR" id="Q9BBP3"/>
<dbReference type="GeneID" id="802869"/>
<dbReference type="GO" id="GO:0009535">
    <property type="term" value="C:chloroplast thylakoid membrane"/>
    <property type="evidence" value="ECO:0007669"/>
    <property type="project" value="UniProtKB-SubCell"/>
</dbReference>
<dbReference type="GO" id="GO:0008137">
    <property type="term" value="F:NADH dehydrogenase (ubiquinone) activity"/>
    <property type="evidence" value="ECO:0007669"/>
    <property type="project" value="InterPro"/>
</dbReference>
<dbReference type="GO" id="GO:0048039">
    <property type="term" value="F:ubiquinone binding"/>
    <property type="evidence" value="ECO:0007669"/>
    <property type="project" value="TreeGrafter"/>
</dbReference>
<dbReference type="GO" id="GO:0042773">
    <property type="term" value="P:ATP synthesis coupled electron transport"/>
    <property type="evidence" value="ECO:0007669"/>
    <property type="project" value="InterPro"/>
</dbReference>
<dbReference type="GO" id="GO:0015990">
    <property type="term" value="P:electron transport coupled proton transport"/>
    <property type="evidence" value="ECO:0007669"/>
    <property type="project" value="TreeGrafter"/>
</dbReference>
<dbReference type="HAMAP" id="MF_00491">
    <property type="entry name" value="NDH1_NuoM"/>
    <property type="match status" value="1"/>
</dbReference>
<dbReference type="InterPro" id="IPR022997">
    <property type="entry name" value="NADH_Q_OxRdtase_chain4"/>
</dbReference>
<dbReference type="InterPro" id="IPR010227">
    <property type="entry name" value="NADH_Q_OxRdtase_chainM/4"/>
</dbReference>
<dbReference type="InterPro" id="IPR003918">
    <property type="entry name" value="NADH_UbQ_OxRdtase"/>
</dbReference>
<dbReference type="InterPro" id="IPR001750">
    <property type="entry name" value="ND/Mrp_TM"/>
</dbReference>
<dbReference type="NCBIfam" id="TIGR01972">
    <property type="entry name" value="NDH_I_M"/>
    <property type="match status" value="1"/>
</dbReference>
<dbReference type="PANTHER" id="PTHR43507:SF21">
    <property type="entry name" value="NAD(P)H-QUINONE OXIDOREDUCTASE CHAIN 4, CHLOROPLASTIC"/>
    <property type="match status" value="1"/>
</dbReference>
<dbReference type="PANTHER" id="PTHR43507">
    <property type="entry name" value="NADH-UBIQUINONE OXIDOREDUCTASE CHAIN 4"/>
    <property type="match status" value="1"/>
</dbReference>
<dbReference type="Pfam" id="PF00361">
    <property type="entry name" value="Proton_antipo_M"/>
    <property type="match status" value="1"/>
</dbReference>
<dbReference type="PRINTS" id="PR01437">
    <property type="entry name" value="NUOXDRDTASE4"/>
</dbReference>
<sequence length="497" mass="55953">MNYFPWLTLVVILPIAGGSLIFLFPHRGNKVIRWYTVCICLIDLLLTTYAFCYHFQLDDPLIQLTESYKWINFFDFYWRFGIDGLSIGPILLTGFITTLATLAAQPITRECKLFYFLMLAMYSGQIGPFSSRDILLFFIMWELELIPVYLLLAMWGGKKRLYSATKFILYTAGSSVFLLMATLGIGLYGSNEPTLNFETLNNQSYPLALEIIVYIGFLIAFAVKSPIIPLHTWLPDTHGEAHYSTCMLLAGILLKMGAYGLVRINMELFSHAHSIFCPWLMILGSIQIIYAASASLGQRNLKKRIAYSSVSHMGFLIIGIGSISDTGLNGAILQIISHGFIGAALFFLSGTSYDRLRLLYLDEMGGMALPMPKIFTVFTILSMASLALPGMSGFFAELIVFWGIITSQKYFLIMKILITFVTAIGMILTPIYSLSILRQMFYGYKFFNTPNSYFFDSGPRELFISISILIPIIGIGIYPDFIFSFSVDKVEAVLSHF</sequence>
<reference key="1">
    <citation type="journal article" date="2000" name="DNA Res.">
        <title>Complete structure of the chloroplast genome of a legume, Lotus japonicus.</title>
        <authorList>
            <person name="Kato T."/>
            <person name="Kaneko T."/>
            <person name="Sato S."/>
            <person name="Nakamura Y."/>
            <person name="Tabata S."/>
        </authorList>
    </citation>
    <scope>NUCLEOTIDE SEQUENCE [LARGE SCALE GENOMIC DNA]</scope>
    <source>
        <strain>cv. Miyakojima MG-20</strain>
    </source>
</reference>
<gene>
    <name type="primary">ndhD</name>
</gene>
<proteinExistence type="inferred from homology"/>
<accession>Q9BBP3</accession>
<organism>
    <name type="scientific">Lotus japonicus</name>
    <name type="common">Lotus corniculatus var. japonicus</name>
    <dbReference type="NCBI Taxonomy" id="34305"/>
    <lineage>
        <taxon>Eukaryota</taxon>
        <taxon>Viridiplantae</taxon>
        <taxon>Streptophyta</taxon>
        <taxon>Embryophyta</taxon>
        <taxon>Tracheophyta</taxon>
        <taxon>Spermatophyta</taxon>
        <taxon>Magnoliopsida</taxon>
        <taxon>eudicotyledons</taxon>
        <taxon>Gunneridae</taxon>
        <taxon>Pentapetalae</taxon>
        <taxon>rosids</taxon>
        <taxon>fabids</taxon>
        <taxon>Fabales</taxon>
        <taxon>Fabaceae</taxon>
        <taxon>Papilionoideae</taxon>
        <taxon>50 kb inversion clade</taxon>
        <taxon>NPAAA clade</taxon>
        <taxon>Hologalegina</taxon>
        <taxon>robinioid clade</taxon>
        <taxon>Loteae</taxon>
        <taxon>Lotus</taxon>
    </lineage>
</organism>
<keyword id="KW-0150">Chloroplast</keyword>
<keyword id="KW-0472">Membrane</keyword>
<keyword id="KW-0520">NAD</keyword>
<keyword id="KW-0521">NADP</keyword>
<keyword id="KW-0934">Plastid</keyword>
<keyword id="KW-0618">Plastoquinone</keyword>
<keyword id="KW-0874">Quinone</keyword>
<keyword id="KW-0691">RNA editing</keyword>
<keyword id="KW-0793">Thylakoid</keyword>
<keyword id="KW-1278">Translocase</keyword>
<keyword id="KW-0812">Transmembrane</keyword>
<keyword id="KW-1133">Transmembrane helix</keyword>
<evidence type="ECO:0000250" key="1"/>
<evidence type="ECO:0000255" key="2"/>
<evidence type="ECO:0000305" key="3"/>
<name>NU4C_LOTJA</name>
<geneLocation type="chloroplast"/>
<protein>
    <recommendedName>
        <fullName>NAD(P)H-quinone oxidoreductase chain 4, chloroplastic</fullName>
        <ecNumber>7.1.1.-</ecNumber>
    </recommendedName>
    <alternativeName>
        <fullName>NAD(P)H dehydrogenase, chain 4</fullName>
    </alternativeName>
    <alternativeName>
        <fullName>NADH-plastoquinone oxidoreductase chain 4</fullName>
    </alternativeName>
</protein>